<gene>
    <name evidence="1" type="primary">speA</name>
    <name type="ordered locus">Sbal195_1805</name>
</gene>
<sequence>MNDWSIDDARAGYNVTHWSQGFYGISDHGEVTVSPDPKNPDYKIGLNELAKDMVKAGVALPVLVRFPQILHHRVNSLCQAFDQAIQKYEYQADYLLVYPIKVNQQQTVVEEILASQASKEVPQLGLEAGSKPELMAVLAMAQKASSVIVCNGYKDNEYIRLALIGEKLGHKVYIVLEKLSELKMVLAESKRLGVTPRLGLRARLAFQGKGKWQASGGEKSKFGLSAAQILLVVEQLKQNDMLDSLQLLHFHLGSQIANIRDIRQGVSEAGRFYCELRALGASVNCFDVGGGLAVDYDGTRSQSNNSMNYGLTEYANNIVNVLTDICNEYEQPMPRIISESGRYLTAHHAVLITDVIGTEAYQPEDIQPPAEESPQLLHNMWHSWSELSGRADQRALIEIYHDSQSDLQEAHSLFALGQLSLAERAWAEQANLRVCHEVQGLLSAKNRYHRPIIDELNEKLADKFFVNFSLFQSLPDAWGIDQVFPVLPLSGLDKAPERRAVMLDITCDSDGIVDQYVDGQGIETTLPVPAWSADSPYLIGFFLVGAYQEILGDMHNLFGDTNSAVVRIEDNGVTNIESVLAGDTVADVLRYVNLDAVAFMRTYEELVNLHIAKDERAQILEELQVGLKGYTYLEDFS</sequence>
<name>SPEA_SHEB9</name>
<dbReference type="EC" id="4.1.1.19" evidence="1"/>
<dbReference type="EMBL" id="CP000891">
    <property type="protein sequence ID" value="ABX48976.1"/>
    <property type="molecule type" value="Genomic_DNA"/>
</dbReference>
<dbReference type="RefSeq" id="WP_006086323.1">
    <property type="nucleotide sequence ID" value="NC_009997.1"/>
</dbReference>
<dbReference type="SMR" id="A9KY70"/>
<dbReference type="GeneID" id="11772027"/>
<dbReference type="KEGG" id="sbn:Sbal195_1805"/>
<dbReference type="HOGENOM" id="CLU_027243_1_0_6"/>
<dbReference type="UniPathway" id="UPA00186">
    <property type="reaction ID" value="UER00284"/>
</dbReference>
<dbReference type="Proteomes" id="UP000000770">
    <property type="component" value="Chromosome"/>
</dbReference>
<dbReference type="GO" id="GO:0008792">
    <property type="term" value="F:arginine decarboxylase activity"/>
    <property type="evidence" value="ECO:0007669"/>
    <property type="project" value="UniProtKB-UniRule"/>
</dbReference>
<dbReference type="GO" id="GO:0046872">
    <property type="term" value="F:metal ion binding"/>
    <property type="evidence" value="ECO:0007669"/>
    <property type="project" value="UniProtKB-KW"/>
</dbReference>
<dbReference type="GO" id="GO:0006527">
    <property type="term" value="P:arginine catabolic process"/>
    <property type="evidence" value="ECO:0007669"/>
    <property type="project" value="InterPro"/>
</dbReference>
<dbReference type="GO" id="GO:0033388">
    <property type="term" value="P:putrescine biosynthetic process from arginine"/>
    <property type="evidence" value="ECO:0007669"/>
    <property type="project" value="TreeGrafter"/>
</dbReference>
<dbReference type="GO" id="GO:0008295">
    <property type="term" value="P:spermidine biosynthetic process"/>
    <property type="evidence" value="ECO:0007669"/>
    <property type="project" value="UniProtKB-UniRule"/>
</dbReference>
<dbReference type="CDD" id="cd06830">
    <property type="entry name" value="PLPDE_III_ADC"/>
    <property type="match status" value="1"/>
</dbReference>
<dbReference type="FunFam" id="1.10.287.3440:FF:000001">
    <property type="entry name" value="Biosynthetic arginine decarboxylase"/>
    <property type="match status" value="1"/>
</dbReference>
<dbReference type="FunFam" id="1.20.58.930:FF:000001">
    <property type="entry name" value="Biosynthetic arginine decarboxylase"/>
    <property type="match status" value="1"/>
</dbReference>
<dbReference type="FunFam" id="2.40.37.10:FF:000001">
    <property type="entry name" value="Biosynthetic arginine decarboxylase"/>
    <property type="match status" value="1"/>
</dbReference>
<dbReference type="FunFam" id="3.20.20.10:FF:000001">
    <property type="entry name" value="Biosynthetic arginine decarboxylase"/>
    <property type="match status" value="1"/>
</dbReference>
<dbReference type="Gene3D" id="1.10.287.3440">
    <property type="match status" value="1"/>
</dbReference>
<dbReference type="Gene3D" id="1.20.58.930">
    <property type="match status" value="1"/>
</dbReference>
<dbReference type="Gene3D" id="3.20.20.10">
    <property type="entry name" value="Alanine racemase"/>
    <property type="match status" value="1"/>
</dbReference>
<dbReference type="Gene3D" id="2.40.37.10">
    <property type="entry name" value="Lyase, Ornithine Decarboxylase, Chain A, domain 1"/>
    <property type="match status" value="1"/>
</dbReference>
<dbReference type="HAMAP" id="MF_01417">
    <property type="entry name" value="SpeA"/>
    <property type="match status" value="1"/>
</dbReference>
<dbReference type="InterPro" id="IPR009006">
    <property type="entry name" value="Ala_racemase/Decarboxylase_C"/>
</dbReference>
<dbReference type="InterPro" id="IPR040634">
    <property type="entry name" value="Arg_decarb_HB"/>
</dbReference>
<dbReference type="InterPro" id="IPR041128">
    <property type="entry name" value="Arg_decarbox_C"/>
</dbReference>
<dbReference type="InterPro" id="IPR002985">
    <property type="entry name" value="Arg_decrbxlase"/>
</dbReference>
<dbReference type="InterPro" id="IPR022644">
    <property type="entry name" value="De-COase2_N"/>
</dbReference>
<dbReference type="InterPro" id="IPR000183">
    <property type="entry name" value="Orn/DAP/Arg_de-COase"/>
</dbReference>
<dbReference type="InterPro" id="IPR029066">
    <property type="entry name" value="PLP-binding_barrel"/>
</dbReference>
<dbReference type="NCBIfam" id="NF003763">
    <property type="entry name" value="PRK05354.1"/>
    <property type="match status" value="1"/>
</dbReference>
<dbReference type="NCBIfam" id="TIGR01273">
    <property type="entry name" value="speA"/>
    <property type="match status" value="1"/>
</dbReference>
<dbReference type="PANTHER" id="PTHR43295">
    <property type="entry name" value="ARGININE DECARBOXYLASE"/>
    <property type="match status" value="1"/>
</dbReference>
<dbReference type="PANTHER" id="PTHR43295:SF9">
    <property type="entry name" value="BIOSYNTHETIC ARGININE DECARBOXYLASE"/>
    <property type="match status" value="1"/>
</dbReference>
<dbReference type="Pfam" id="PF17810">
    <property type="entry name" value="Arg_decarb_HB"/>
    <property type="match status" value="1"/>
</dbReference>
<dbReference type="Pfam" id="PF17944">
    <property type="entry name" value="Arg_decarbox_C"/>
    <property type="match status" value="1"/>
</dbReference>
<dbReference type="Pfam" id="PF02784">
    <property type="entry name" value="Orn_Arg_deC_N"/>
    <property type="match status" value="1"/>
</dbReference>
<dbReference type="PIRSF" id="PIRSF001336">
    <property type="entry name" value="Arg_decrbxlase"/>
    <property type="match status" value="1"/>
</dbReference>
<dbReference type="PRINTS" id="PR01180">
    <property type="entry name" value="ARGDCRBXLASE"/>
</dbReference>
<dbReference type="PRINTS" id="PR01179">
    <property type="entry name" value="ODADCRBXLASE"/>
</dbReference>
<dbReference type="SUPFAM" id="SSF51419">
    <property type="entry name" value="PLP-binding barrel"/>
    <property type="match status" value="1"/>
</dbReference>
<feature type="chain" id="PRO_1000087406" description="Biosynthetic arginine decarboxylase">
    <location>
        <begin position="1"/>
        <end position="637"/>
    </location>
</feature>
<feature type="binding site" evidence="1">
    <location>
        <begin position="286"/>
        <end position="296"/>
    </location>
    <ligand>
        <name>substrate</name>
    </ligand>
</feature>
<feature type="modified residue" description="N6-(pyridoxal phosphate)lysine" evidence="1">
    <location>
        <position position="101"/>
    </location>
</feature>
<keyword id="KW-0210">Decarboxylase</keyword>
<keyword id="KW-0456">Lyase</keyword>
<keyword id="KW-0460">Magnesium</keyword>
<keyword id="KW-0479">Metal-binding</keyword>
<keyword id="KW-0620">Polyamine biosynthesis</keyword>
<keyword id="KW-0663">Pyridoxal phosphate</keyword>
<keyword id="KW-0745">Spermidine biosynthesis</keyword>
<protein>
    <recommendedName>
        <fullName evidence="1">Biosynthetic arginine decarboxylase</fullName>
        <shortName evidence="1">ADC</shortName>
        <ecNumber evidence="1">4.1.1.19</ecNumber>
    </recommendedName>
</protein>
<organism>
    <name type="scientific">Shewanella baltica (strain OS195)</name>
    <dbReference type="NCBI Taxonomy" id="399599"/>
    <lineage>
        <taxon>Bacteria</taxon>
        <taxon>Pseudomonadati</taxon>
        <taxon>Pseudomonadota</taxon>
        <taxon>Gammaproteobacteria</taxon>
        <taxon>Alteromonadales</taxon>
        <taxon>Shewanellaceae</taxon>
        <taxon>Shewanella</taxon>
    </lineage>
</organism>
<accession>A9KY70</accession>
<proteinExistence type="inferred from homology"/>
<reference key="1">
    <citation type="submission" date="2007-11" db="EMBL/GenBank/DDBJ databases">
        <title>Complete sequence of chromosome of Shewanella baltica OS195.</title>
        <authorList>
            <consortium name="US DOE Joint Genome Institute"/>
            <person name="Copeland A."/>
            <person name="Lucas S."/>
            <person name="Lapidus A."/>
            <person name="Barry K."/>
            <person name="Glavina del Rio T."/>
            <person name="Dalin E."/>
            <person name="Tice H."/>
            <person name="Pitluck S."/>
            <person name="Chain P."/>
            <person name="Malfatti S."/>
            <person name="Shin M."/>
            <person name="Vergez L."/>
            <person name="Schmutz J."/>
            <person name="Larimer F."/>
            <person name="Land M."/>
            <person name="Hauser L."/>
            <person name="Kyrpides N."/>
            <person name="Kim E."/>
            <person name="Brettar I."/>
            <person name="Rodrigues J."/>
            <person name="Konstantinidis K."/>
            <person name="Klappenbach J."/>
            <person name="Hofle M."/>
            <person name="Tiedje J."/>
            <person name="Richardson P."/>
        </authorList>
    </citation>
    <scope>NUCLEOTIDE SEQUENCE [LARGE SCALE GENOMIC DNA]</scope>
    <source>
        <strain>OS195</strain>
    </source>
</reference>
<evidence type="ECO:0000255" key="1">
    <source>
        <dbReference type="HAMAP-Rule" id="MF_01417"/>
    </source>
</evidence>
<comment type="function">
    <text evidence="1">Catalyzes the biosynthesis of agmatine from arginine.</text>
</comment>
<comment type="catalytic activity">
    <reaction evidence="1">
        <text>L-arginine + H(+) = agmatine + CO2</text>
        <dbReference type="Rhea" id="RHEA:17641"/>
        <dbReference type="ChEBI" id="CHEBI:15378"/>
        <dbReference type="ChEBI" id="CHEBI:16526"/>
        <dbReference type="ChEBI" id="CHEBI:32682"/>
        <dbReference type="ChEBI" id="CHEBI:58145"/>
        <dbReference type="EC" id="4.1.1.19"/>
    </reaction>
</comment>
<comment type="cofactor">
    <cofactor evidence="1">
        <name>Mg(2+)</name>
        <dbReference type="ChEBI" id="CHEBI:18420"/>
    </cofactor>
</comment>
<comment type="cofactor">
    <cofactor evidence="1">
        <name>pyridoxal 5'-phosphate</name>
        <dbReference type="ChEBI" id="CHEBI:597326"/>
    </cofactor>
</comment>
<comment type="pathway">
    <text evidence="1">Amine and polyamine biosynthesis; agmatine biosynthesis; agmatine from L-arginine: step 1/1.</text>
</comment>
<comment type="similarity">
    <text evidence="1">Belongs to the Orn/Lys/Arg decarboxylase class-II family. SpeA subfamily.</text>
</comment>